<evidence type="ECO:0000255" key="1">
    <source>
        <dbReference type="HAMAP-Rule" id="MF_00163"/>
    </source>
</evidence>
<evidence type="ECO:0000305" key="2"/>
<keyword id="KW-0378">Hydrolase</keyword>
<keyword id="KW-0408">Iron</keyword>
<keyword id="KW-0479">Metal-binding</keyword>
<keyword id="KW-0648">Protein biosynthesis</keyword>
<name>DEF_BRUSU</name>
<proteinExistence type="inferred from homology"/>
<comment type="function">
    <text evidence="1">Removes the formyl group from the N-terminal Met of newly synthesized proteins. Requires at least a dipeptide for an efficient rate of reaction. N-terminal L-methionine is a prerequisite for activity but the enzyme has broad specificity at other positions.</text>
</comment>
<comment type="catalytic activity">
    <reaction evidence="1">
        <text>N-terminal N-formyl-L-methionyl-[peptide] + H2O = N-terminal L-methionyl-[peptide] + formate</text>
        <dbReference type="Rhea" id="RHEA:24420"/>
        <dbReference type="Rhea" id="RHEA-COMP:10639"/>
        <dbReference type="Rhea" id="RHEA-COMP:10640"/>
        <dbReference type="ChEBI" id="CHEBI:15377"/>
        <dbReference type="ChEBI" id="CHEBI:15740"/>
        <dbReference type="ChEBI" id="CHEBI:49298"/>
        <dbReference type="ChEBI" id="CHEBI:64731"/>
        <dbReference type="EC" id="3.5.1.88"/>
    </reaction>
</comment>
<comment type="cofactor">
    <cofactor evidence="1">
        <name>Fe(2+)</name>
        <dbReference type="ChEBI" id="CHEBI:29033"/>
    </cofactor>
    <text evidence="1">Binds 1 Fe(2+) ion.</text>
</comment>
<comment type="similarity">
    <text evidence="1">Belongs to the polypeptide deformylase family.</text>
</comment>
<comment type="sequence caution" evidence="2">
    <conflict type="erroneous initiation">
        <sequence resource="EMBL-CDS" id="AAN34202"/>
    </conflict>
</comment>
<comment type="sequence caution" evidence="2">
    <conflict type="erroneous initiation">
        <sequence resource="EMBL-CDS" id="AEM20479"/>
    </conflict>
    <text>Extended N-terminus.</text>
</comment>
<gene>
    <name evidence="1" type="primary">def</name>
    <name type="ordered locus">BRA1035</name>
    <name type="ordered locus">BS1330_II1027</name>
</gene>
<feature type="chain" id="PRO_0000082753" description="Peptide deformylase">
    <location>
        <begin position="1"/>
        <end position="175"/>
    </location>
</feature>
<feature type="active site" evidence="1">
    <location>
        <position position="137"/>
    </location>
</feature>
<feature type="binding site" evidence="1">
    <location>
        <position position="94"/>
    </location>
    <ligand>
        <name>Fe cation</name>
        <dbReference type="ChEBI" id="CHEBI:24875"/>
    </ligand>
</feature>
<feature type="binding site" evidence="1">
    <location>
        <position position="136"/>
    </location>
    <ligand>
        <name>Fe cation</name>
        <dbReference type="ChEBI" id="CHEBI:24875"/>
    </ligand>
</feature>
<feature type="binding site" evidence="1">
    <location>
        <position position="140"/>
    </location>
    <ligand>
        <name>Fe cation</name>
        <dbReference type="ChEBI" id="CHEBI:24875"/>
    </ligand>
</feature>
<accession>P63914</accession>
<accession>G0KE41</accession>
<accession>Q8YDB4</accession>
<organism>
    <name type="scientific">Brucella suis biovar 1 (strain 1330)</name>
    <dbReference type="NCBI Taxonomy" id="204722"/>
    <lineage>
        <taxon>Bacteria</taxon>
        <taxon>Pseudomonadati</taxon>
        <taxon>Pseudomonadota</taxon>
        <taxon>Alphaproteobacteria</taxon>
        <taxon>Hyphomicrobiales</taxon>
        <taxon>Brucellaceae</taxon>
        <taxon>Brucella/Ochrobactrum group</taxon>
        <taxon>Brucella</taxon>
    </lineage>
</organism>
<protein>
    <recommendedName>
        <fullName evidence="1">Peptide deformylase</fullName>
        <shortName evidence="1">PDF</shortName>
        <ecNumber evidence="1">3.5.1.88</ecNumber>
    </recommendedName>
    <alternativeName>
        <fullName evidence="1">Polypeptide deformylase</fullName>
    </alternativeName>
</protein>
<reference key="1">
    <citation type="journal article" date="2002" name="Proc. Natl. Acad. Sci. U.S.A.">
        <title>The Brucella suis genome reveals fundamental similarities between animal and plant pathogens and symbionts.</title>
        <authorList>
            <person name="Paulsen I.T."/>
            <person name="Seshadri R."/>
            <person name="Nelson K.E."/>
            <person name="Eisen J.A."/>
            <person name="Heidelberg J.F."/>
            <person name="Read T.D."/>
            <person name="Dodson R.J."/>
            <person name="Umayam L.A."/>
            <person name="Brinkac L.M."/>
            <person name="Beanan M.J."/>
            <person name="Daugherty S.C."/>
            <person name="DeBoy R.T."/>
            <person name="Durkin A.S."/>
            <person name="Kolonay J.F."/>
            <person name="Madupu R."/>
            <person name="Nelson W.C."/>
            <person name="Ayodeji B."/>
            <person name="Kraul M."/>
            <person name="Shetty J."/>
            <person name="Malek J.A."/>
            <person name="Van Aken S.E."/>
            <person name="Riedmuller S."/>
            <person name="Tettelin H."/>
            <person name="Gill S.R."/>
            <person name="White O."/>
            <person name="Salzberg S.L."/>
            <person name="Hoover D.L."/>
            <person name="Lindler L.E."/>
            <person name="Halling S.M."/>
            <person name="Boyle S.M."/>
            <person name="Fraser C.M."/>
        </authorList>
    </citation>
    <scope>NUCLEOTIDE SEQUENCE [LARGE SCALE GENOMIC DNA]</scope>
    <source>
        <strain>1330</strain>
    </source>
</reference>
<reference key="2">
    <citation type="journal article" date="2011" name="J. Bacteriol.">
        <title>Revised genome sequence of Brucella suis 1330.</title>
        <authorList>
            <person name="Tae H."/>
            <person name="Shallom S."/>
            <person name="Settlage R."/>
            <person name="Preston D."/>
            <person name="Adams L.G."/>
            <person name="Garner H.R."/>
        </authorList>
    </citation>
    <scope>NUCLEOTIDE SEQUENCE [LARGE SCALE GENOMIC DNA]</scope>
    <source>
        <strain>1330</strain>
    </source>
</reference>
<sequence>MSVKPLIILPDPVLRQVSKPVERFDDQLRKFASDMFDTMYDAPGIGLAAIQVGEPIRMLVIDLAKEGEPKAPHIFVNPTIVQSSDKRSTYEEGCLSIPDYYAEVERPATVKVNYFDADGKPQSMEADGLMATCLQHEIDHLNGVLFIDHISKLKRDMVIKKFKKLASQRASKKVL</sequence>
<dbReference type="EC" id="3.5.1.88" evidence="1"/>
<dbReference type="EMBL" id="AE014292">
    <property type="protein sequence ID" value="AAN34202.1"/>
    <property type="status" value="ALT_INIT"/>
    <property type="molecule type" value="Genomic_DNA"/>
</dbReference>
<dbReference type="EMBL" id="CP002998">
    <property type="protein sequence ID" value="AEM20479.1"/>
    <property type="status" value="ALT_INIT"/>
    <property type="molecule type" value="Genomic_DNA"/>
</dbReference>
<dbReference type="RefSeq" id="WP_002965616.1">
    <property type="nucleotide sequence ID" value="NZ_KN046805.1"/>
</dbReference>
<dbReference type="SMR" id="P63914"/>
<dbReference type="GeneID" id="97534916"/>
<dbReference type="KEGG" id="bms:BRA1035"/>
<dbReference type="KEGG" id="bsi:BS1330_II1027"/>
<dbReference type="PATRIC" id="fig|204722.21.peg.1084"/>
<dbReference type="HOGENOM" id="CLU_061901_2_0_5"/>
<dbReference type="PhylomeDB" id="P63914"/>
<dbReference type="Proteomes" id="UP000007104">
    <property type="component" value="Chromosome II"/>
</dbReference>
<dbReference type="GO" id="GO:0046872">
    <property type="term" value="F:metal ion binding"/>
    <property type="evidence" value="ECO:0007669"/>
    <property type="project" value="UniProtKB-KW"/>
</dbReference>
<dbReference type="GO" id="GO:0042586">
    <property type="term" value="F:peptide deformylase activity"/>
    <property type="evidence" value="ECO:0007669"/>
    <property type="project" value="UniProtKB-UniRule"/>
</dbReference>
<dbReference type="GO" id="GO:0043686">
    <property type="term" value="P:co-translational protein modification"/>
    <property type="evidence" value="ECO:0007669"/>
    <property type="project" value="TreeGrafter"/>
</dbReference>
<dbReference type="GO" id="GO:0006412">
    <property type="term" value="P:translation"/>
    <property type="evidence" value="ECO:0007669"/>
    <property type="project" value="UniProtKB-UniRule"/>
</dbReference>
<dbReference type="CDD" id="cd00487">
    <property type="entry name" value="Pep_deformylase"/>
    <property type="match status" value="1"/>
</dbReference>
<dbReference type="FunFam" id="3.90.45.10:FF:000005">
    <property type="entry name" value="Peptide deformylase"/>
    <property type="match status" value="1"/>
</dbReference>
<dbReference type="Gene3D" id="3.90.45.10">
    <property type="entry name" value="Peptide deformylase"/>
    <property type="match status" value="1"/>
</dbReference>
<dbReference type="HAMAP" id="MF_00163">
    <property type="entry name" value="Pep_deformylase"/>
    <property type="match status" value="1"/>
</dbReference>
<dbReference type="InterPro" id="IPR023635">
    <property type="entry name" value="Peptide_deformylase"/>
</dbReference>
<dbReference type="InterPro" id="IPR036821">
    <property type="entry name" value="Peptide_deformylase_sf"/>
</dbReference>
<dbReference type="NCBIfam" id="TIGR00079">
    <property type="entry name" value="pept_deformyl"/>
    <property type="match status" value="1"/>
</dbReference>
<dbReference type="NCBIfam" id="NF001159">
    <property type="entry name" value="PRK00150.1-3"/>
    <property type="match status" value="1"/>
</dbReference>
<dbReference type="PANTHER" id="PTHR10458">
    <property type="entry name" value="PEPTIDE DEFORMYLASE"/>
    <property type="match status" value="1"/>
</dbReference>
<dbReference type="PANTHER" id="PTHR10458:SF22">
    <property type="entry name" value="PEPTIDE DEFORMYLASE"/>
    <property type="match status" value="1"/>
</dbReference>
<dbReference type="Pfam" id="PF01327">
    <property type="entry name" value="Pep_deformylase"/>
    <property type="match status" value="1"/>
</dbReference>
<dbReference type="PIRSF" id="PIRSF004749">
    <property type="entry name" value="Pep_def"/>
    <property type="match status" value="1"/>
</dbReference>
<dbReference type="PRINTS" id="PR01576">
    <property type="entry name" value="PDEFORMYLASE"/>
</dbReference>
<dbReference type="SUPFAM" id="SSF56420">
    <property type="entry name" value="Peptide deformylase"/>
    <property type="match status" value="1"/>
</dbReference>